<organism>
    <name type="scientific">Xanthomonas campestris pv. campestris (strain B100)</name>
    <dbReference type="NCBI Taxonomy" id="509169"/>
    <lineage>
        <taxon>Bacteria</taxon>
        <taxon>Pseudomonadati</taxon>
        <taxon>Pseudomonadota</taxon>
        <taxon>Gammaproteobacteria</taxon>
        <taxon>Lysobacterales</taxon>
        <taxon>Lysobacteraceae</taxon>
        <taxon>Xanthomonas</taxon>
    </lineage>
</organism>
<reference key="1">
    <citation type="journal article" date="2008" name="J. Biotechnol.">
        <title>The genome of Xanthomonas campestris pv. campestris B100 and its use for the reconstruction of metabolic pathways involved in xanthan biosynthesis.</title>
        <authorList>
            <person name="Vorhoelter F.-J."/>
            <person name="Schneiker S."/>
            <person name="Goesmann A."/>
            <person name="Krause L."/>
            <person name="Bekel T."/>
            <person name="Kaiser O."/>
            <person name="Linke B."/>
            <person name="Patschkowski T."/>
            <person name="Rueckert C."/>
            <person name="Schmid J."/>
            <person name="Sidhu V.K."/>
            <person name="Sieber V."/>
            <person name="Tauch A."/>
            <person name="Watt S.A."/>
            <person name="Weisshaar B."/>
            <person name="Becker A."/>
            <person name="Niehaus K."/>
            <person name="Puehler A."/>
        </authorList>
    </citation>
    <scope>NUCLEOTIDE SEQUENCE [LARGE SCALE GENOMIC DNA]</scope>
    <source>
        <strain>B100</strain>
    </source>
</reference>
<name>CLPP_XANCB</name>
<feature type="chain" id="PRO_1000124725" description="ATP-dependent Clp protease proteolytic subunit">
    <location>
        <begin position="1"/>
        <end position="208"/>
    </location>
</feature>
<feature type="active site" description="Nucleophile" evidence="1">
    <location>
        <position position="105"/>
    </location>
</feature>
<feature type="active site" evidence="1">
    <location>
        <position position="130"/>
    </location>
</feature>
<dbReference type="EC" id="3.4.21.92" evidence="1"/>
<dbReference type="EMBL" id="AM920689">
    <property type="protein sequence ID" value="CAP52746.1"/>
    <property type="molecule type" value="Genomic_DNA"/>
</dbReference>
<dbReference type="SMR" id="B0RTF7"/>
<dbReference type="MEROPS" id="S14.001"/>
<dbReference type="KEGG" id="xca:xcc-b100_3381"/>
<dbReference type="HOGENOM" id="CLU_058707_3_2_6"/>
<dbReference type="Proteomes" id="UP000001188">
    <property type="component" value="Chromosome"/>
</dbReference>
<dbReference type="GO" id="GO:0005737">
    <property type="term" value="C:cytoplasm"/>
    <property type="evidence" value="ECO:0007669"/>
    <property type="project" value="UniProtKB-SubCell"/>
</dbReference>
<dbReference type="GO" id="GO:0009368">
    <property type="term" value="C:endopeptidase Clp complex"/>
    <property type="evidence" value="ECO:0007669"/>
    <property type="project" value="TreeGrafter"/>
</dbReference>
<dbReference type="GO" id="GO:0004176">
    <property type="term" value="F:ATP-dependent peptidase activity"/>
    <property type="evidence" value="ECO:0007669"/>
    <property type="project" value="InterPro"/>
</dbReference>
<dbReference type="GO" id="GO:0051117">
    <property type="term" value="F:ATPase binding"/>
    <property type="evidence" value="ECO:0007669"/>
    <property type="project" value="TreeGrafter"/>
</dbReference>
<dbReference type="GO" id="GO:0004252">
    <property type="term" value="F:serine-type endopeptidase activity"/>
    <property type="evidence" value="ECO:0007669"/>
    <property type="project" value="UniProtKB-UniRule"/>
</dbReference>
<dbReference type="GO" id="GO:0006515">
    <property type="term" value="P:protein quality control for misfolded or incompletely synthesized proteins"/>
    <property type="evidence" value="ECO:0007669"/>
    <property type="project" value="TreeGrafter"/>
</dbReference>
<dbReference type="CDD" id="cd07017">
    <property type="entry name" value="S14_ClpP_2"/>
    <property type="match status" value="1"/>
</dbReference>
<dbReference type="FunFam" id="3.90.226.10:FF:000001">
    <property type="entry name" value="ATP-dependent Clp protease proteolytic subunit"/>
    <property type="match status" value="1"/>
</dbReference>
<dbReference type="Gene3D" id="3.90.226.10">
    <property type="entry name" value="2-enoyl-CoA Hydratase, Chain A, domain 1"/>
    <property type="match status" value="1"/>
</dbReference>
<dbReference type="HAMAP" id="MF_00444">
    <property type="entry name" value="ClpP"/>
    <property type="match status" value="1"/>
</dbReference>
<dbReference type="InterPro" id="IPR001907">
    <property type="entry name" value="ClpP"/>
</dbReference>
<dbReference type="InterPro" id="IPR029045">
    <property type="entry name" value="ClpP/crotonase-like_dom_sf"/>
</dbReference>
<dbReference type="InterPro" id="IPR023562">
    <property type="entry name" value="ClpP/TepA"/>
</dbReference>
<dbReference type="InterPro" id="IPR033135">
    <property type="entry name" value="ClpP_His_AS"/>
</dbReference>
<dbReference type="InterPro" id="IPR018215">
    <property type="entry name" value="ClpP_Ser_AS"/>
</dbReference>
<dbReference type="NCBIfam" id="TIGR00493">
    <property type="entry name" value="clpP"/>
    <property type="match status" value="1"/>
</dbReference>
<dbReference type="NCBIfam" id="NF001368">
    <property type="entry name" value="PRK00277.1"/>
    <property type="match status" value="1"/>
</dbReference>
<dbReference type="NCBIfam" id="NF009205">
    <property type="entry name" value="PRK12553.1"/>
    <property type="match status" value="1"/>
</dbReference>
<dbReference type="PANTHER" id="PTHR10381">
    <property type="entry name" value="ATP-DEPENDENT CLP PROTEASE PROTEOLYTIC SUBUNIT"/>
    <property type="match status" value="1"/>
</dbReference>
<dbReference type="PANTHER" id="PTHR10381:SF70">
    <property type="entry name" value="ATP-DEPENDENT CLP PROTEASE PROTEOLYTIC SUBUNIT"/>
    <property type="match status" value="1"/>
</dbReference>
<dbReference type="Pfam" id="PF00574">
    <property type="entry name" value="CLP_protease"/>
    <property type="match status" value="1"/>
</dbReference>
<dbReference type="PRINTS" id="PR00127">
    <property type="entry name" value="CLPPROTEASEP"/>
</dbReference>
<dbReference type="SUPFAM" id="SSF52096">
    <property type="entry name" value="ClpP/crotonase"/>
    <property type="match status" value="1"/>
</dbReference>
<dbReference type="PROSITE" id="PS00382">
    <property type="entry name" value="CLP_PROTEASE_HIS"/>
    <property type="match status" value="1"/>
</dbReference>
<dbReference type="PROSITE" id="PS00381">
    <property type="entry name" value="CLP_PROTEASE_SER"/>
    <property type="match status" value="1"/>
</dbReference>
<keyword id="KW-0963">Cytoplasm</keyword>
<keyword id="KW-0378">Hydrolase</keyword>
<keyword id="KW-0645">Protease</keyword>
<keyword id="KW-0720">Serine protease</keyword>
<evidence type="ECO:0000255" key="1">
    <source>
        <dbReference type="HAMAP-Rule" id="MF_00444"/>
    </source>
</evidence>
<protein>
    <recommendedName>
        <fullName evidence="1">ATP-dependent Clp protease proteolytic subunit</fullName>
        <ecNumber evidence="1">3.4.21.92</ecNumber>
    </recommendedName>
    <alternativeName>
        <fullName evidence="1">Endopeptidase Clp</fullName>
    </alternativeName>
</protein>
<sequence length="208" mass="22796">MSIVTKALNLVPMVVEQTSRGERAYDIYSRLLKERLIFLVGPIDDHMANVIVAQLLFLEADNPEKDISIYINSPGGVVTAGMAIYDTMQYIKPDVSTICVGQAASMGALLLASGAAGKRYALPNSRVMIHQPLGGFQGQATDIDIHAREILTLRSRLNEILAKHTGQSLETIARDTERDNFKSAVDAQAYGLVDQVLERRPEESIQPS</sequence>
<gene>
    <name evidence="1" type="primary">clpP</name>
    <name type="ordered locus">xcc-b100_3381</name>
</gene>
<proteinExistence type="inferred from homology"/>
<comment type="function">
    <text evidence="1">Cleaves peptides in various proteins in a process that requires ATP hydrolysis. Has a chymotrypsin-like activity. Plays a major role in the degradation of misfolded proteins.</text>
</comment>
<comment type="catalytic activity">
    <reaction evidence="1">
        <text>Hydrolysis of proteins to small peptides in the presence of ATP and magnesium. alpha-casein is the usual test substrate. In the absence of ATP, only oligopeptides shorter than five residues are hydrolyzed (such as succinyl-Leu-Tyr-|-NHMec, and Leu-Tyr-Leu-|-Tyr-Trp, in which cleavage of the -Tyr-|-Leu- and -Tyr-|-Trp bonds also occurs).</text>
        <dbReference type="EC" id="3.4.21.92"/>
    </reaction>
</comment>
<comment type="subunit">
    <text evidence="1">Fourteen ClpP subunits assemble into 2 heptameric rings which stack back to back to give a disk-like structure with a central cavity, resembling the structure of eukaryotic proteasomes.</text>
</comment>
<comment type="subcellular location">
    <subcellularLocation>
        <location evidence="1">Cytoplasm</location>
    </subcellularLocation>
</comment>
<comment type="similarity">
    <text evidence="1">Belongs to the peptidase S14 family.</text>
</comment>
<accession>B0RTF7</accession>